<reference key="1">
    <citation type="journal article" date="2004" name="J. Bacteriol.">
        <title>Complete genome sequence of the genetically tractable hydrogenotrophic methanogen Methanococcus maripaludis.</title>
        <authorList>
            <person name="Hendrickson E.L."/>
            <person name="Kaul R."/>
            <person name="Zhou Y."/>
            <person name="Bovee D."/>
            <person name="Chapman P."/>
            <person name="Chung J."/>
            <person name="Conway de Macario E."/>
            <person name="Dodsworth J.A."/>
            <person name="Gillett W."/>
            <person name="Graham D.E."/>
            <person name="Hackett M."/>
            <person name="Haydock A.K."/>
            <person name="Kang A."/>
            <person name="Land M.L."/>
            <person name="Levy R."/>
            <person name="Lie T.J."/>
            <person name="Major T.A."/>
            <person name="Moore B.C."/>
            <person name="Porat I."/>
            <person name="Palmeiri A."/>
            <person name="Rouse G."/>
            <person name="Saenphimmachak C."/>
            <person name="Soell D."/>
            <person name="Van Dien S."/>
            <person name="Wang T."/>
            <person name="Whitman W.B."/>
            <person name="Xia Q."/>
            <person name="Zhang Y."/>
            <person name="Larimer F.W."/>
            <person name="Olson M.V."/>
            <person name="Leigh J.A."/>
        </authorList>
    </citation>
    <scope>NUCLEOTIDE SEQUENCE [LARGE SCALE GENOMIC DNA]</scope>
    <source>
        <strain>DSM 14266 / JCM 13030 / NBRC 101832 / S2 / LL</strain>
    </source>
</reference>
<sequence>MRAFKVKRDTNETKIQLELNIDGTGKYSITTGIPFFDHVLSSFAKHGSFDLKLDVLGDLEIDDHHTVEDVGIVLGKAFENMEKKNIKRFGWAIIPMDEAKATVSIDIGGRPFVVGNYVPNTERIGSFSTENVVHFFESFSNNAKINLHFEVTGENEHHKVEALFKAFGVAMDMATQIDERKGIVSTKGVI</sequence>
<comment type="catalytic activity">
    <reaction evidence="1">
        <text>D-erythro-1-(imidazol-4-yl)glycerol 3-phosphate = 3-(imidazol-4-yl)-2-oxopropyl phosphate + H2O</text>
        <dbReference type="Rhea" id="RHEA:11040"/>
        <dbReference type="ChEBI" id="CHEBI:15377"/>
        <dbReference type="ChEBI" id="CHEBI:57766"/>
        <dbReference type="ChEBI" id="CHEBI:58278"/>
        <dbReference type="EC" id="4.2.1.19"/>
    </reaction>
</comment>
<comment type="pathway">
    <text evidence="1">Amino-acid biosynthesis; L-histidine biosynthesis; L-histidine from 5-phospho-alpha-D-ribose 1-diphosphate: step 6/9.</text>
</comment>
<comment type="subcellular location">
    <subcellularLocation>
        <location evidence="1">Cytoplasm</location>
    </subcellularLocation>
</comment>
<comment type="similarity">
    <text evidence="1">Belongs to the imidazoleglycerol-phosphate dehydratase family.</text>
</comment>
<gene>
    <name evidence="1" type="primary">hisB</name>
    <name type="ordered locus">MMP0548</name>
</gene>
<feature type="chain" id="PRO_0000158192" description="Imidazoleglycerol-phosphate dehydratase">
    <location>
        <begin position="1"/>
        <end position="190"/>
    </location>
</feature>
<name>HIS7_METMP</name>
<accession>P60888</accession>
<protein>
    <recommendedName>
        <fullName evidence="1">Imidazoleglycerol-phosphate dehydratase</fullName>
        <shortName evidence="1">IGPD</shortName>
        <ecNumber evidence="1">4.2.1.19</ecNumber>
    </recommendedName>
</protein>
<dbReference type="EC" id="4.2.1.19" evidence="1"/>
<dbReference type="EMBL" id="BX950229">
    <property type="protein sequence ID" value="CAF30104.1"/>
    <property type="molecule type" value="Genomic_DNA"/>
</dbReference>
<dbReference type="RefSeq" id="WP_011170492.1">
    <property type="nucleotide sequence ID" value="NC_005791.1"/>
</dbReference>
<dbReference type="SMR" id="P60888"/>
<dbReference type="STRING" id="267377.MMP0548"/>
<dbReference type="EnsemblBacteria" id="CAF30104">
    <property type="protein sequence ID" value="CAF30104"/>
    <property type="gene ID" value="MMP0548"/>
</dbReference>
<dbReference type="GeneID" id="2762551"/>
<dbReference type="KEGG" id="mmp:MMP0548"/>
<dbReference type="PATRIC" id="fig|267377.15.peg.561"/>
<dbReference type="eggNOG" id="arCOG04398">
    <property type="taxonomic scope" value="Archaea"/>
</dbReference>
<dbReference type="HOGENOM" id="CLU_044308_2_0_2"/>
<dbReference type="OrthoDB" id="103579at2157"/>
<dbReference type="UniPathway" id="UPA00031">
    <property type="reaction ID" value="UER00011"/>
</dbReference>
<dbReference type="Proteomes" id="UP000000590">
    <property type="component" value="Chromosome"/>
</dbReference>
<dbReference type="GO" id="GO:0005737">
    <property type="term" value="C:cytoplasm"/>
    <property type="evidence" value="ECO:0007669"/>
    <property type="project" value="UniProtKB-SubCell"/>
</dbReference>
<dbReference type="GO" id="GO:0004424">
    <property type="term" value="F:imidazoleglycerol-phosphate dehydratase activity"/>
    <property type="evidence" value="ECO:0007669"/>
    <property type="project" value="UniProtKB-UniRule"/>
</dbReference>
<dbReference type="GO" id="GO:0000105">
    <property type="term" value="P:L-histidine biosynthetic process"/>
    <property type="evidence" value="ECO:0007669"/>
    <property type="project" value="UniProtKB-UniRule"/>
</dbReference>
<dbReference type="CDD" id="cd07914">
    <property type="entry name" value="IGPD"/>
    <property type="match status" value="1"/>
</dbReference>
<dbReference type="FunFam" id="3.30.230.40:FF:000001">
    <property type="entry name" value="Imidazoleglycerol-phosphate dehydratase HisB"/>
    <property type="match status" value="1"/>
</dbReference>
<dbReference type="FunFam" id="3.30.230.40:FF:000003">
    <property type="entry name" value="Imidazoleglycerol-phosphate dehydratase HisB"/>
    <property type="match status" value="1"/>
</dbReference>
<dbReference type="Gene3D" id="3.30.230.40">
    <property type="entry name" value="Imidazole glycerol phosphate dehydratase, domain 1"/>
    <property type="match status" value="2"/>
</dbReference>
<dbReference type="HAMAP" id="MF_00076">
    <property type="entry name" value="HisB"/>
    <property type="match status" value="1"/>
</dbReference>
<dbReference type="InterPro" id="IPR038494">
    <property type="entry name" value="IGPD_sf"/>
</dbReference>
<dbReference type="InterPro" id="IPR000807">
    <property type="entry name" value="ImidazoleglycerolP_deHydtase"/>
</dbReference>
<dbReference type="InterPro" id="IPR020565">
    <property type="entry name" value="ImidazoleglycerP_deHydtase_CS"/>
</dbReference>
<dbReference type="InterPro" id="IPR020568">
    <property type="entry name" value="Ribosomal_Su5_D2-typ_SF"/>
</dbReference>
<dbReference type="NCBIfam" id="NF002111">
    <property type="entry name" value="PRK00951.2-1"/>
    <property type="match status" value="1"/>
</dbReference>
<dbReference type="NCBIfam" id="NF002113">
    <property type="entry name" value="PRK00951.2-3"/>
    <property type="match status" value="1"/>
</dbReference>
<dbReference type="NCBIfam" id="NF002114">
    <property type="entry name" value="PRK00951.2-4"/>
    <property type="match status" value="1"/>
</dbReference>
<dbReference type="PANTHER" id="PTHR23133:SF2">
    <property type="entry name" value="IMIDAZOLEGLYCEROL-PHOSPHATE DEHYDRATASE"/>
    <property type="match status" value="1"/>
</dbReference>
<dbReference type="PANTHER" id="PTHR23133">
    <property type="entry name" value="IMIDAZOLEGLYCEROL-PHOSPHATE DEHYDRATASE HIS7"/>
    <property type="match status" value="1"/>
</dbReference>
<dbReference type="Pfam" id="PF00475">
    <property type="entry name" value="IGPD"/>
    <property type="match status" value="1"/>
</dbReference>
<dbReference type="SUPFAM" id="SSF54211">
    <property type="entry name" value="Ribosomal protein S5 domain 2-like"/>
    <property type="match status" value="2"/>
</dbReference>
<dbReference type="PROSITE" id="PS00954">
    <property type="entry name" value="IGP_DEHYDRATASE_1"/>
    <property type="match status" value="1"/>
</dbReference>
<dbReference type="PROSITE" id="PS00955">
    <property type="entry name" value="IGP_DEHYDRATASE_2"/>
    <property type="match status" value="1"/>
</dbReference>
<organism>
    <name type="scientific">Methanococcus maripaludis (strain DSM 14266 / JCM 13030 / NBRC 101832 / S2 / LL)</name>
    <dbReference type="NCBI Taxonomy" id="267377"/>
    <lineage>
        <taxon>Archaea</taxon>
        <taxon>Methanobacteriati</taxon>
        <taxon>Methanobacteriota</taxon>
        <taxon>Methanomada group</taxon>
        <taxon>Methanococci</taxon>
        <taxon>Methanococcales</taxon>
        <taxon>Methanococcaceae</taxon>
        <taxon>Methanococcus</taxon>
    </lineage>
</organism>
<keyword id="KW-0028">Amino-acid biosynthesis</keyword>
<keyword id="KW-0963">Cytoplasm</keyword>
<keyword id="KW-0368">Histidine biosynthesis</keyword>
<keyword id="KW-0456">Lyase</keyword>
<keyword id="KW-1185">Reference proteome</keyword>
<proteinExistence type="inferred from homology"/>
<evidence type="ECO:0000255" key="1">
    <source>
        <dbReference type="HAMAP-Rule" id="MF_00076"/>
    </source>
</evidence>